<keyword id="KW-0067">ATP-binding</keyword>
<keyword id="KW-0997">Cell inner membrane</keyword>
<keyword id="KW-1003">Cell membrane</keyword>
<keyword id="KW-0472">Membrane</keyword>
<keyword id="KW-0547">Nucleotide-binding</keyword>
<keyword id="KW-1185">Reference proteome</keyword>
<keyword id="KW-0762">Sugar transport</keyword>
<keyword id="KW-1278">Translocase</keyword>
<keyword id="KW-0813">Transport</keyword>
<feature type="chain" id="PRO_0000092482" description="Maltose/maltodextrin import ATP-binding protein MalK">
    <location>
        <begin position="1"/>
        <end position="369"/>
    </location>
</feature>
<feature type="domain" description="ABC transporter" evidence="1">
    <location>
        <begin position="4"/>
        <end position="234"/>
    </location>
</feature>
<feature type="binding site" evidence="1">
    <location>
        <begin position="36"/>
        <end position="43"/>
    </location>
    <ligand>
        <name>ATP</name>
        <dbReference type="ChEBI" id="CHEBI:30616"/>
    </ligand>
</feature>
<feature type="mutagenesis site" description="Loss of transport. No effect on ATP-binding activity but decrease in ATP hydrolysis. Retains repressor activity." evidence="2">
    <original>L</original>
    <variation>F</variation>
    <location>
        <position position="86"/>
    </location>
</feature>
<feature type="mutagenesis site" description="Loss of transport. No effect on ATP-binding activity but decrease in ATP hydrolysis. Retains repressor activity." evidence="2">
    <original>P</original>
    <variation>L</variation>
    <location>
        <position position="160"/>
    </location>
</feature>
<feature type="mutagenesis site" description="Loss of transport. No effect on ATP-binding activity but decrease in ATP hydrolysis. Retains repressor activity." evidence="2">
    <original>D</original>
    <variation>N</variation>
    <location>
        <position position="165"/>
    </location>
</feature>
<feature type="mutagenesis site" description="Loss of transport. No effect on ATP-binding and ATP hydrolysis. Retains repressor activity." evidence="2">
    <original>E</original>
    <variation>K</variation>
    <location>
        <position position="306"/>
    </location>
</feature>
<feature type="sequence conflict" description="In Ref. 1; CAA38188 and 2; no nucleotide entry." evidence="4" ref="1 2">
    <original>R</original>
    <variation>A</variation>
    <location>
        <position position="141"/>
    </location>
</feature>
<accession>P19566</accession>
<accession>O06952</accession>
<comment type="function">
    <text evidence="1 3">Part of the ABC transporter complex MalEFGK involved in maltose/maltodextrin import. Responsible for energy coupling to the transport system.</text>
</comment>
<comment type="catalytic activity">
    <reaction evidence="1">
        <text>D-maltose(out) + ATP + H2O = D-maltose(in) + ADP + phosphate + H(+)</text>
        <dbReference type="Rhea" id="RHEA:22132"/>
        <dbReference type="ChEBI" id="CHEBI:15377"/>
        <dbReference type="ChEBI" id="CHEBI:15378"/>
        <dbReference type="ChEBI" id="CHEBI:17306"/>
        <dbReference type="ChEBI" id="CHEBI:30616"/>
        <dbReference type="ChEBI" id="CHEBI:43474"/>
        <dbReference type="ChEBI" id="CHEBI:456216"/>
        <dbReference type="EC" id="7.5.2.1"/>
    </reaction>
</comment>
<comment type="subunit">
    <text evidence="1">The complex is composed of two ATP-binding proteins (MalK), two transmembrane proteins (MalG and MalK) and a solute-binding protein (MalE).</text>
</comment>
<comment type="subcellular location">
    <subcellularLocation>
        <location>Cell inner membrane</location>
        <topology>Peripheral membrane protein</topology>
    </subcellularLocation>
</comment>
<comment type="miscellaneous">
    <text>Target for inducer exclusion, mediated by the unphosphorylated enzyme III of the phosphotransferase system for glucose and resulting in the inhibition of maltose transport.</text>
</comment>
<comment type="miscellaneous">
    <text>Acts as a repressor of mal genes. In absence of maltose, the C-terminus of MalK interacts with MalT, then MalT becomes inactive and the mal genes are not activated. In presence of maltose, MalK is tightly associated with the MalFG complex and has no affinity for MalT.</text>
</comment>
<comment type="similarity">
    <text evidence="1">Belongs to the ABC transporter superfamily. Maltooligosaccharide importer (TC 3.A.1.1.1) family.</text>
</comment>
<evidence type="ECO:0000255" key="1">
    <source>
        <dbReference type="HAMAP-Rule" id="MF_01709"/>
    </source>
</evidence>
<evidence type="ECO:0000269" key="2">
    <source>
    </source>
</evidence>
<evidence type="ECO:0000269" key="3">
    <source>
    </source>
</evidence>
<evidence type="ECO:0000305" key="4"/>
<gene>
    <name evidence="1" type="primary">malK</name>
    <name type="ordered locus">STM4230</name>
</gene>
<name>MALK_SALTY</name>
<organism>
    <name type="scientific">Salmonella typhimurium (strain LT2 / SGSC1412 / ATCC 700720)</name>
    <dbReference type="NCBI Taxonomy" id="99287"/>
    <lineage>
        <taxon>Bacteria</taxon>
        <taxon>Pseudomonadati</taxon>
        <taxon>Pseudomonadota</taxon>
        <taxon>Gammaproteobacteria</taxon>
        <taxon>Enterobacterales</taxon>
        <taxon>Enterobacteriaceae</taxon>
        <taxon>Salmonella</taxon>
    </lineage>
</organism>
<dbReference type="EC" id="7.5.2.1" evidence="1"/>
<dbReference type="EMBL" id="X54292">
    <property type="protein sequence ID" value="CAA38188.1"/>
    <property type="molecule type" value="Genomic_DNA"/>
</dbReference>
<dbReference type="EMBL" id="AE006468">
    <property type="protein sequence ID" value="AAL23054.1"/>
    <property type="molecule type" value="Genomic_DNA"/>
</dbReference>
<dbReference type="PIR" id="S05329">
    <property type="entry name" value="S05329"/>
</dbReference>
<dbReference type="RefSeq" id="NP_463095.1">
    <property type="nucleotide sequence ID" value="NC_003197.2"/>
</dbReference>
<dbReference type="RefSeq" id="WP_000179176.1">
    <property type="nucleotide sequence ID" value="NC_003197.2"/>
</dbReference>
<dbReference type="SMR" id="P19566"/>
<dbReference type="IntAct" id="P19566">
    <property type="interactions" value="1"/>
</dbReference>
<dbReference type="STRING" id="99287.STM4230"/>
<dbReference type="PaxDb" id="99287-STM4230"/>
<dbReference type="GeneID" id="1255756"/>
<dbReference type="KEGG" id="stm:STM4230"/>
<dbReference type="PATRIC" id="fig|99287.12.peg.4450"/>
<dbReference type="HOGENOM" id="CLU_000604_1_1_6"/>
<dbReference type="OMA" id="RCHLFKE"/>
<dbReference type="PhylomeDB" id="P19566"/>
<dbReference type="BioCyc" id="SENT99287:STM4230-MONOMER"/>
<dbReference type="Proteomes" id="UP000001014">
    <property type="component" value="Chromosome"/>
</dbReference>
<dbReference type="GO" id="GO:0055052">
    <property type="term" value="C:ATP-binding cassette (ABC) transporter complex, substrate-binding subunit-containing"/>
    <property type="evidence" value="ECO:0000318"/>
    <property type="project" value="GO_Central"/>
</dbReference>
<dbReference type="GO" id="GO:1990060">
    <property type="term" value="C:maltose transport complex"/>
    <property type="evidence" value="ECO:0000318"/>
    <property type="project" value="GO_Central"/>
</dbReference>
<dbReference type="GO" id="GO:0015423">
    <property type="term" value="F:ABC-type maltose transporter activity"/>
    <property type="evidence" value="ECO:0000318"/>
    <property type="project" value="GO_Central"/>
</dbReference>
<dbReference type="GO" id="GO:0005524">
    <property type="term" value="F:ATP binding"/>
    <property type="evidence" value="ECO:0007669"/>
    <property type="project" value="UniProtKB-KW"/>
</dbReference>
<dbReference type="GO" id="GO:0016887">
    <property type="term" value="F:ATP hydrolysis activity"/>
    <property type="evidence" value="ECO:0007669"/>
    <property type="project" value="InterPro"/>
</dbReference>
<dbReference type="CDD" id="cd03301">
    <property type="entry name" value="ABC_MalK_N"/>
    <property type="match status" value="1"/>
</dbReference>
<dbReference type="FunFam" id="3.40.50.300:FF:000042">
    <property type="entry name" value="Maltose/maltodextrin ABC transporter, ATP-binding protein"/>
    <property type="match status" value="1"/>
</dbReference>
<dbReference type="FunFam" id="2.40.50.100:FF:000014">
    <property type="entry name" value="Maltose/maltodextrin import ATP-binding protein MalK"/>
    <property type="match status" value="1"/>
</dbReference>
<dbReference type="FunFam" id="2.40.50.140:FF:000070">
    <property type="entry name" value="Maltose/maltodextrin import ATP-binding protein MalK"/>
    <property type="match status" value="1"/>
</dbReference>
<dbReference type="Gene3D" id="2.40.50.100">
    <property type="match status" value="1"/>
</dbReference>
<dbReference type="Gene3D" id="2.40.50.140">
    <property type="entry name" value="Nucleic acid-binding proteins"/>
    <property type="match status" value="1"/>
</dbReference>
<dbReference type="Gene3D" id="3.40.50.300">
    <property type="entry name" value="P-loop containing nucleotide triphosphate hydrolases"/>
    <property type="match status" value="1"/>
</dbReference>
<dbReference type="InterPro" id="IPR003593">
    <property type="entry name" value="AAA+_ATPase"/>
</dbReference>
<dbReference type="InterPro" id="IPR003439">
    <property type="entry name" value="ABC_transporter-like_ATP-bd"/>
</dbReference>
<dbReference type="InterPro" id="IPR017871">
    <property type="entry name" value="ABC_transporter-like_CS"/>
</dbReference>
<dbReference type="InterPro" id="IPR015855">
    <property type="entry name" value="ABC_transpr_MalK-like"/>
</dbReference>
<dbReference type="InterPro" id="IPR047641">
    <property type="entry name" value="ABC_transpr_MalK/UgpC-like"/>
</dbReference>
<dbReference type="InterPro" id="IPR008995">
    <property type="entry name" value="Mo/tungstate-bd_C_term_dom"/>
</dbReference>
<dbReference type="InterPro" id="IPR012340">
    <property type="entry name" value="NA-bd_OB-fold"/>
</dbReference>
<dbReference type="InterPro" id="IPR027417">
    <property type="entry name" value="P-loop_NTPase"/>
</dbReference>
<dbReference type="InterPro" id="IPR013611">
    <property type="entry name" value="Transp-assoc_OB_typ2"/>
</dbReference>
<dbReference type="NCBIfam" id="NF008233">
    <property type="entry name" value="PRK11000.1"/>
    <property type="match status" value="1"/>
</dbReference>
<dbReference type="NCBIfam" id="NF008653">
    <property type="entry name" value="PRK11650.1"/>
    <property type="match status" value="1"/>
</dbReference>
<dbReference type="PANTHER" id="PTHR43875">
    <property type="entry name" value="MALTODEXTRIN IMPORT ATP-BINDING PROTEIN MSMX"/>
    <property type="match status" value="1"/>
</dbReference>
<dbReference type="PANTHER" id="PTHR43875:SF3">
    <property type="entry name" value="MALTOSE_MALTODEXTRIN IMPORT ATP-BINDING PROTEIN MALK"/>
    <property type="match status" value="1"/>
</dbReference>
<dbReference type="Pfam" id="PF00005">
    <property type="entry name" value="ABC_tran"/>
    <property type="match status" value="1"/>
</dbReference>
<dbReference type="Pfam" id="PF08402">
    <property type="entry name" value="TOBE_2"/>
    <property type="match status" value="1"/>
</dbReference>
<dbReference type="SMART" id="SM00382">
    <property type="entry name" value="AAA"/>
    <property type="match status" value="1"/>
</dbReference>
<dbReference type="SUPFAM" id="SSF50331">
    <property type="entry name" value="MOP-like"/>
    <property type="match status" value="1"/>
</dbReference>
<dbReference type="SUPFAM" id="SSF52540">
    <property type="entry name" value="P-loop containing nucleoside triphosphate hydrolases"/>
    <property type="match status" value="1"/>
</dbReference>
<dbReference type="PROSITE" id="PS00211">
    <property type="entry name" value="ABC_TRANSPORTER_1"/>
    <property type="match status" value="1"/>
</dbReference>
<dbReference type="PROSITE" id="PS50893">
    <property type="entry name" value="ABC_TRANSPORTER_2"/>
    <property type="match status" value="1"/>
</dbReference>
<dbReference type="PROSITE" id="PS51245">
    <property type="entry name" value="MALK"/>
    <property type="match status" value="1"/>
</dbReference>
<proteinExistence type="evidence at protein level"/>
<protein>
    <recommendedName>
        <fullName evidence="1">Maltose/maltodextrin import ATP-binding protein MalK</fullName>
        <ecNumber evidence="1">7.5.2.1</ecNumber>
    </recommendedName>
</protein>
<reference key="1">
    <citation type="journal article" date="1989" name="Mol. Gen. Genet.">
        <title>Comparison of sequences from the malB regions of Salmonella typhimurium and Enterobacter aerogenes with Escherichia coli K12: a potential new regulatory site in the interoperonic region.</title>
        <authorList>
            <person name="Dahl M.K."/>
            <person name="Francoz E."/>
            <person name="Saurin W."/>
            <person name="Boos W."/>
            <person name="Manson M.D."/>
            <person name="Hofnung M."/>
        </authorList>
    </citation>
    <scope>NUCLEOTIDE SEQUENCE [GENOMIC DNA]</scope>
</reference>
<reference key="2">
    <citation type="journal article" date="1992" name="Biochim. Biophys. Acta">
        <title>Completion of the nucleotide sequence of the 'maltose B' region in Salmonella typhimurium: the high conservation of the malM gene suggests a selected physiological role for its product.</title>
        <authorList>
            <person name="Schneider E."/>
            <person name="Francoz E."/>
            <person name="Dassa E."/>
        </authorList>
    </citation>
    <scope>NUCLEOTIDE SEQUENCE [GENOMIC DNA]</scope>
    <source>
        <strain>LT2</strain>
    </source>
</reference>
<reference key="3">
    <citation type="submission" date="1997-04" db="EMBL/GenBank/DDBJ databases">
        <authorList>
            <person name="Schneider E."/>
        </authorList>
    </citation>
    <scope>SEQUENCE REVISION TO 99-102</scope>
</reference>
<reference key="4">
    <citation type="journal article" date="2001" name="Nature">
        <title>Complete genome sequence of Salmonella enterica serovar Typhimurium LT2.</title>
        <authorList>
            <person name="McClelland M."/>
            <person name="Sanderson K.E."/>
            <person name="Spieth J."/>
            <person name="Clifton S.W."/>
            <person name="Latreille P."/>
            <person name="Courtney L."/>
            <person name="Porwollik S."/>
            <person name="Ali J."/>
            <person name="Dante M."/>
            <person name="Du F."/>
            <person name="Hou S."/>
            <person name="Layman D."/>
            <person name="Leonard S."/>
            <person name="Nguyen C."/>
            <person name="Scott K."/>
            <person name="Holmes A."/>
            <person name="Grewal N."/>
            <person name="Mulvaney E."/>
            <person name="Ryan E."/>
            <person name="Sun H."/>
            <person name="Florea L."/>
            <person name="Miller W."/>
            <person name="Stoneking T."/>
            <person name="Nhan M."/>
            <person name="Waterston R."/>
            <person name="Wilson R.K."/>
        </authorList>
    </citation>
    <scope>NUCLEOTIDE SEQUENCE [LARGE SCALE GENOMIC DNA]</scope>
    <source>
        <strain>LT2 / SGSC1412 / ATCC 700720</strain>
    </source>
</reference>
<reference key="5">
    <citation type="journal article" date="1998" name="J. Bacteriol.">
        <title>Domain structure of the ATP-binding-cassette protein MalK of salmonella typhimurium as assessed by coexpressed half molecules and LacK'-'MalK chimeras.</title>
        <authorList>
            <person name="Schmees G."/>
            <person name="Schneider E."/>
        </authorList>
    </citation>
    <scope>FUNCTION</scope>
</reference>
<reference key="6">
    <citation type="journal article" date="2000" name="J. Bacteriol.">
        <title>Novel missense mutations that affect the transport function of MalK, the ATP-binding-cassette subunit of the Salmonella enterica serovar typhimurium maltose transport system.</title>
        <authorList>
            <person name="Hunke S."/>
            <person name="Landmesser H."/>
            <person name="Schneider E."/>
        </authorList>
    </citation>
    <scope>MUTAGENESIS OF LEU-86; PRO-160; ASP-165 AND GLU-306</scope>
</reference>
<reference key="7">
    <citation type="journal article" date="2002" name="Eur. J. Biochem.">
        <title>Functional characterization of the maltose ATP-binding-cassette transporter of Salmonella typhimurium by means of monoclonal antibodies directed against the MalK subunit.</title>
        <authorList>
            <person name="Stein A."/>
            <person name="Seifert M."/>
            <person name="Volkmer-Engert R."/>
            <person name="Siepelmeyer J."/>
            <person name="Jahreis K."/>
            <person name="Schneider E."/>
        </authorList>
    </citation>
    <scope>INTERACTION WITH MALT AND PTS ENZYME IIA</scope>
</reference>
<sequence>MASVQLRNVTKAWGDVVVSKDINLDIHDGEFVVFVGPSGCGKSTLLRMIAGLETITSGDLFIGETRMNDIPPAERGVGMVFQSYALYPHLSVAENMSFGLKLAGAKKEVMNQRVNQVAEVLQLAHLLERKPKALSGGQRQRVAIGRTLVAEPRVFLLDEPLSNLDAALRVQMRIEISRLHKRLGRTMIYVTHDQVEAMTLADKIVVLDAGRVAQVGKPLELYHYPADRFVAGFIGSPKMNFLPVKVTATAIEQVQVELPNRQQIWLPVESRGVQVGANMSLGIRPEHLLPSDIADVTLEGEVQVVEQLGHETQIHIQIPAIRQNLVYRQNDVVLVEEGATFAIGLPPERCHLFREDGSACRRLHQEPGV</sequence>